<comment type="function">
    <text evidence="1">Catalyzes the attachment of isoleucine to tRNA(Ile). As IleRS can inadvertently accommodate and process structurally similar amino acids such as valine, to avoid such errors it has two additional distinct tRNA(Ile)-dependent editing activities. One activity is designated as 'pretransfer' editing and involves the hydrolysis of activated Val-AMP. The other activity is designated 'posttransfer' editing and involves deacylation of mischarged Val-tRNA(Ile).</text>
</comment>
<comment type="catalytic activity">
    <reaction evidence="1">
        <text>tRNA(Ile) + L-isoleucine + ATP = L-isoleucyl-tRNA(Ile) + AMP + diphosphate</text>
        <dbReference type="Rhea" id="RHEA:11060"/>
        <dbReference type="Rhea" id="RHEA-COMP:9666"/>
        <dbReference type="Rhea" id="RHEA-COMP:9695"/>
        <dbReference type="ChEBI" id="CHEBI:30616"/>
        <dbReference type="ChEBI" id="CHEBI:33019"/>
        <dbReference type="ChEBI" id="CHEBI:58045"/>
        <dbReference type="ChEBI" id="CHEBI:78442"/>
        <dbReference type="ChEBI" id="CHEBI:78528"/>
        <dbReference type="ChEBI" id="CHEBI:456215"/>
        <dbReference type="EC" id="6.1.1.5"/>
    </reaction>
</comment>
<comment type="cofactor">
    <cofactor evidence="1">
        <name>Zn(2+)</name>
        <dbReference type="ChEBI" id="CHEBI:29105"/>
    </cofactor>
</comment>
<comment type="subunit">
    <text evidence="1">Monomer.</text>
</comment>
<comment type="subcellular location">
    <subcellularLocation>
        <location evidence="1">Cytoplasm</location>
    </subcellularLocation>
</comment>
<comment type="domain">
    <text evidence="1">IleRS has two distinct active sites: one for aminoacylation and one for editing. The misactivated valine is translocated from the active site to the editing site, which sterically excludes the correctly activated isoleucine. The single editing site contains two valyl binding pockets, one specific for each substrate (Val-AMP or Val-tRNA(Ile)).</text>
</comment>
<comment type="similarity">
    <text evidence="1">Belongs to the class-I aminoacyl-tRNA synthetase family. IleS type 2 subfamily.</text>
</comment>
<name>SYI_PICTO</name>
<reference key="1">
    <citation type="journal article" date="2004" name="Proc. Natl. Acad. Sci. U.S.A.">
        <title>Genome sequence of Picrophilus torridus and its implications for life around pH 0.</title>
        <authorList>
            <person name="Fuetterer O."/>
            <person name="Angelov A."/>
            <person name="Liesegang H."/>
            <person name="Gottschalk G."/>
            <person name="Schleper C."/>
            <person name="Schepers B."/>
            <person name="Dock C."/>
            <person name="Antranikian G."/>
            <person name="Liebl W."/>
        </authorList>
    </citation>
    <scope>NUCLEOTIDE SEQUENCE [LARGE SCALE GENOMIC DNA]</scope>
    <source>
        <strain>ATCC 700027 / DSM 9790 / JCM 10055 / NBRC 100828 / KAW 2/3</strain>
    </source>
</reference>
<sequence>MKATLYENINVNKSMIDINNEILNYWKENHIDENIIKSNRNLKPFAFLEGPPTANGRPHVGHLMTRAVKDTVMRYKYMTGHDILRRTGGWDCHGLPVELEAEKHFGFKNKKDIENFGIEKFNQYCRDSVFRYIDEWNIVDDLVGFWVDKENSYITLKNDYMESEWWALKTLYENNLLVKDYKIVPYCPRCGTSLSSHEVAQGYKNVDDPSVFVKFAEKGRKNRYFIAWTTTPWTLPSNEFLVVNPDMDYSLIESDGFEYYLLSSKVESLFNDYKLIKTFKGRDLEGIEYEQLMPFLEKPENAFRVVAASFVTAEDGTGIVHAAPAFGADDFEIGKRFSVEILNPVDQDGRFNEKLPWSGLFVTDANKSIINYLKENNLLFKAETMKHDYPFCYRCGTRLLYYPLDTWFIKVSLIRKKLLENNEKINWVPDYLKNGRFGNFLEEAKDWALSRDRYWGTPLPIWRCNKNHYLAIGSRDDLLKYGGYIPEDLHRPYIDDVVLKCPECGSEMHRESYVIDTWFDSGSASYAAMHYPFSKDFTKSHFPVDFITEAIDQTRGWFYTLHVVASLLFDENAYKNVVSISHILDENGQKMSKSKGNFIAAIDFLNDYGADAARMFFFTGAPWNSKSVNKKLIGEITRKNLSTLLNVYSFFASNANIDEYRFTEIKEPENLLDRWMLSRLNTTIIKVRENMDNYNIHTALRYIEDLISELSNVYLRLSRKRFWEGNLDDSKERAYSTLYYTLRETIKMMAPITPFFSEYLYQKLSPGMPSVHMESYPEAIERFIDNDLENEMEHAIEIMELSRRTRQELNIKGRQPVKEILIYSDIKLRDDIIDIISPELNAESIRFIKSDEMPLKITVRADISKVAKLLKSRINDFNLYLERNNDLVYRELKSKGKINFDGIYLTDDMFIMNEEVNGNYGFNKDERSGIYLFINREIDNDLLLEGYAREIIRRIQVMRKDLNLEYSEKIKTYIDADEDIRSAVERYMEKIKNETLSSEILFKNDPEARAWDIDDKTVYIKIVK</sequence>
<gene>
    <name evidence="1" type="primary">ileS</name>
    <name type="ordered locus">PTO0411</name>
</gene>
<dbReference type="EC" id="6.1.1.5" evidence="1"/>
<dbReference type="EMBL" id="AE017261">
    <property type="protein sequence ID" value="AAT42996.1"/>
    <property type="molecule type" value="Genomic_DNA"/>
</dbReference>
<dbReference type="RefSeq" id="WP_011177212.1">
    <property type="nucleotide sequence ID" value="NC_005877.1"/>
</dbReference>
<dbReference type="SMR" id="Q6L206"/>
<dbReference type="FunCoup" id="Q6L206">
    <property type="interactions" value="235"/>
</dbReference>
<dbReference type="STRING" id="263820.PTO0411"/>
<dbReference type="PaxDb" id="263820-PTO0411"/>
<dbReference type="GeneID" id="2844251"/>
<dbReference type="KEGG" id="pto:PTO0411"/>
<dbReference type="PATRIC" id="fig|263820.9.peg.436"/>
<dbReference type="eggNOG" id="arCOG00807">
    <property type="taxonomic scope" value="Archaea"/>
</dbReference>
<dbReference type="HOGENOM" id="CLU_001493_1_1_2"/>
<dbReference type="InParanoid" id="Q6L206"/>
<dbReference type="OrthoDB" id="30823at2157"/>
<dbReference type="Proteomes" id="UP000000438">
    <property type="component" value="Chromosome"/>
</dbReference>
<dbReference type="GO" id="GO:0005737">
    <property type="term" value="C:cytoplasm"/>
    <property type="evidence" value="ECO:0007669"/>
    <property type="project" value="UniProtKB-SubCell"/>
</dbReference>
<dbReference type="GO" id="GO:0002161">
    <property type="term" value="F:aminoacyl-tRNA deacylase activity"/>
    <property type="evidence" value="ECO:0007669"/>
    <property type="project" value="InterPro"/>
</dbReference>
<dbReference type="GO" id="GO:0005524">
    <property type="term" value="F:ATP binding"/>
    <property type="evidence" value="ECO:0007669"/>
    <property type="project" value="UniProtKB-UniRule"/>
</dbReference>
<dbReference type="GO" id="GO:0004822">
    <property type="term" value="F:isoleucine-tRNA ligase activity"/>
    <property type="evidence" value="ECO:0007669"/>
    <property type="project" value="UniProtKB-UniRule"/>
</dbReference>
<dbReference type="GO" id="GO:0000049">
    <property type="term" value="F:tRNA binding"/>
    <property type="evidence" value="ECO:0007669"/>
    <property type="project" value="InterPro"/>
</dbReference>
<dbReference type="GO" id="GO:0008270">
    <property type="term" value="F:zinc ion binding"/>
    <property type="evidence" value="ECO:0007669"/>
    <property type="project" value="UniProtKB-UniRule"/>
</dbReference>
<dbReference type="GO" id="GO:0006428">
    <property type="term" value="P:isoleucyl-tRNA aminoacylation"/>
    <property type="evidence" value="ECO:0007669"/>
    <property type="project" value="UniProtKB-UniRule"/>
</dbReference>
<dbReference type="CDD" id="cd07961">
    <property type="entry name" value="Anticodon_Ia_Ile_ABEc"/>
    <property type="match status" value="1"/>
</dbReference>
<dbReference type="CDD" id="cd00818">
    <property type="entry name" value="IleRS_core"/>
    <property type="match status" value="1"/>
</dbReference>
<dbReference type="FunFam" id="3.40.50.620:FF:000063">
    <property type="entry name" value="Isoleucine--tRNA ligase"/>
    <property type="match status" value="1"/>
</dbReference>
<dbReference type="FunFam" id="3.40.50.620:FF:000075">
    <property type="entry name" value="Isoleucine--tRNA ligase"/>
    <property type="match status" value="1"/>
</dbReference>
<dbReference type="Gene3D" id="3.40.50.620">
    <property type="entry name" value="HUPs"/>
    <property type="match status" value="2"/>
</dbReference>
<dbReference type="Gene3D" id="1.10.730.10">
    <property type="entry name" value="Isoleucyl-tRNA Synthetase, Domain 1"/>
    <property type="match status" value="1"/>
</dbReference>
<dbReference type="Gene3D" id="3.90.740.10">
    <property type="entry name" value="Valyl/Leucyl/Isoleucyl-tRNA synthetase, editing domain"/>
    <property type="match status" value="1"/>
</dbReference>
<dbReference type="HAMAP" id="MF_02003">
    <property type="entry name" value="Ile_tRNA_synth_type2"/>
    <property type="match status" value="1"/>
</dbReference>
<dbReference type="InterPro" id="IPR001412">
    <property type="entry name" value="aa-tRNA-synth_I_CS"/>
</dbReference>
<dbReference type="InterPro" id="IPR002300">
    <property type="entry name" value="aa-tRNA-synth_Ia"/>
</dbReference>
<dbReference type="InterPro" id="IPR033709">
    <property type="entry name" value="Anticodon_Ile_ABEc"/>
</dbReference>
<dbReference type="InterPro" id="IPR002301">
    <property type="entry name" value="Ile-tRNA-ligase"/>
</dbReference>
<dbReference type="InterPro" id="IPR023586">
    <property type="entry name" value="Ile-tRNA-ligase_type2"/>
</dbReference>
<dbReference type="InterPro" id="IPR013155">
    <property type="entry name" value="M/V/L/I-tRNA-synth_anticd-bd"/>
</dbReference>
<dbReference type="InterPro" id="IPR014729">
    <property type="entry name" value="Rossmann-like_a/b/a_fold"/>
</dbReference>
<dbReference type="InterPro" id="IPR009080">
    <property type="entry name" value="tRNAsynth_Ia_anticodon-bd"/>
</dbReference>
<dbReference type="InterPro" id="IPR009008">
    <property type="entry name" value="Val/Leu/Ile-tRNA-synth_edit"/>
</dbReference>
<dbReference type="NCBIfam" id="TIGR00392">
    <property type="entry name" value="ileS"/>
    <property type="match status" value="1"/>
</dbReference>
<dbReference type="PANTHER" id="PTHR42780:SF1">
    <property type="entry name" value="ISOLEUCINE--TRNA LIGASE, CYTOPLASMIC"/>
    <property type="match status" value="1"/>
</dbReference>
<dbReference type="PANTHER" id="PTHR42780">
    <property type="entry name" value="SOLEUCYL-TRNA SYNTHETASE"/>
    <property type="match status" value="1"/>
</dbReference>
<dbReference type="Pfam" id="PF08264">
    <property type="entry name" value="Anticodon_1"/>
    <property type="match status" value="1"/>
</dbReference>
<dbReference type="Pfam" id="PF19302">
    <property type="entry name" value="DUF5915"/>
    <property type="match status" value="1"/>
</dbReference>
<dbReference type="Pfam" id="PF00133">
    <property type="entry name" value="tRNA-synt_1"/>
    <property type="match status" value="1"/>
</dbReference>
<dbReference type="PRINTS" id="PR00984">
    <property type="entry name" value="TRNASYNTHILE"/>
</dbReference>
<dbReference type="SUPFAM" id="SSF47323">
    <property type="entry name" value="Anticodon-binding domain of a subclass of class I aminoacyl-tRNA synthetases"/>
    <property type="match status" value="2"/>
</dbReference>
<dbReference type="SUPFAM" id="SSF52374">
    <property type="entry name" value="Nucleotidylyl transferase"/>
    <property type="match status" value="1"/>
</dbReference>
<dbReference type="SUPFAM" id="SSF50677">
    <property type="entry name" value="ValRS/IleRS/LeuRS editing domain"/>
    <property type="match status" value="1"/>
</dbReference>
<dbReference type="PROSITE" id="PS00178">
    <property type="entry name" value="AA_TRNA_LIGASE_I"/>
    <property type="match status" value="1"/>
</dbReference>
<keyword id="KW-0030">Aminoacyl-tRNA synthetase</keyword>
<keyword id="KW-0067">ATP-binding</keyword>
<keyword id="KW-0963">Cytoplasm</keyword>
<keyword id="KW-0436">Ligase</keyword>
<keyword id="KW-0479">Metal-binding</keyword>
<keyword id="KW-0547">Nucleotide-binding</keyword>
<keyword id="KW-0648">Protein biosynthesis</keyword>
<keyword id="KW-0862">Zinc</keyword>
<protein>
    <recommendedName>
        <fullName evidence="1">Isoleucine--tRNA ligase</fullName>
        <ecNumber evidence="1">6.1.1.5</ecNumber>
    </recommendedName>
    <alternativeName>
        <fullName evidence="1">Isoleucyl-tRNA synthetase</fullName>
        <shortName evidence="1">IleRS</shortName>
    </alternativeName>
</protein>
<organism>
    <name type="scientific">Picrophilus torridus (strain ATCC 700027 / DSM 9790 / JCM 10055 / NBRC 100828 / KAW 2/3)</name>
    <dbReference type="NCBI Taxonomy" id="1122961"/>
    <lineage>
        <taxon>Archaea</taxon>
        <taxon>Methanobacteriati</taxon>
        <taxon>Thermoplasmatota</taxon>
        <taxon>Thermoplasmata</taxon>
        <taxon>Thermoplasmatales</taxon>
        <taxon>Picrophilaceae</taxon>
        <taxon>Picrophilus</taxon>
    </lineage>
</organism>
<evidence type="ECO:0000255" key="1">
    <source>
        <dbReference type="HAMAP-Rule" id="MF_02003"/>
    </source>
</evidence>
<proteinExistence type="inferred from homology"/>
<feature type="chain" id="PRO_0000098586" description="Isoleucine--tRNA ligase">
    <location>
        <begin position="1"/>
        <end position="1024"/>
    </location>
</feature>
<feature type="short sequence motif" description="'HIGH' region">
    <location>
        <begin position="52"/>
        <end position="62"/>
    </location>
</feature>
<feature type="short sequence motif" description="'KMSKS' region">
    <location>
        <begin position="590"/>
        <end position="594"/>
    </location>
</feature>
<feature type="binding site" evidence="1">
    <location>
        <position position="593"/>
    </location>
    <ligand>
        <name>ATP</name>
        <dbReference type="ChEBI" id="CHEBI:30616"/>
    </ligand>
</feature>
<accession>Q6L206</accession>